<feature type="chain" id="PRO_1000082412" description="Putative HTH-type transcriptional regulatory protein Mevan_1514">
    <location>
        <begin position="1"/>
        <end position="327"/>
    </location>
</feature>
<feature type="domain" description="HTH cro/C1-type" evidence="1">
    <location>
        <begin position="128"/>
        <end position="189"/>
    </location>
</feature>
<feature type="DNA-binding region" description="H-T-H motif" evidence="1">
    <location>
        <begin position="139"/>
        <end position="158"/>
    </location>
</feature>
<sequence length="327" mass="37328">MREVMLSECMNLLYESNFVISKPFGRSCFDLIAKKADLKLLIKILKNIDSLSTEQSEELLNIARILQAVPLIIGSRTRNSVMEEGAVYERFGIKAVTFLTFQEQVRGIPPVVYANRGGFFVNIDGKALKETREKLNISVGELAEFSRVSRKTIYKYEQNEANPSAEVAIKIEEYLDVPLIKGINITDYFEGVNLPKSREEAFEKILKEGEDFKVKVIEILGDMGFNLLETTKAPFDAVAEESKNKGDEVHNVLFTNIQETENEEIRKKAIIVDEISKIFNSHSLLILETRKNEDKKIMSMSIRELEKMGDTVDLIDFIEKRKKSKDI</sequence>
<organism>
    <name type="scientific">Methanococcus vannielii (strain ATCC 35089 / DSM 1224 / JCM 13029 / OCM 148 / SB)</name>
    <dbReference type="NCBI Taxonomy" id="406327"/>
    <lineage>
        <taxon>Archaea</taxon>
        <taxon>Methanobacteriati</taxon>
        <taxon>Methanobacteriota</taxon>
        <taxon>Methanomada group</taxon>
        <taxon>Methanococci</taxon>
        <taxon>Methanococcales</taxon>
        <taxon>Methanococcaceae</taxon>
        <taxon>Methanococcus</taxon>
    </lineage>
</organism>
<keyword id="KW-0238">DNA-binding</keyword>
<keyword id="KW-0804">Transcription</keyword>
<keyword id="KW-0805">Transcription regulation</keyword>
<name>Y1514_METVS</name>
<evidence type="ECO:0000255" key="1">
    <source>
        <dbReference type="HAMAP-Rule" id="MF_00584"/>
    </source>
</evidence>
<reference key="1">
    <citation type="submission" date="2007-06" db="EMBL/GenBank/DDBJ databases">
        <title>Complete sequence of Methanococcus vannielii SB.</title>
        <authorList>
            <consortium name="US DOE Joint Genome Institute"/>
            <person name="Copeland A."/>
            <person name="Lucas S."/>
            <person name="Lapidus A."/>
            <person name="Barry K."/>
            <person name="Glavina del Rio T."/>
            <person name="Dalin E."/>
            <person name="Tice H."/>
            <person name="Pitluck S."/>
            <person name="Chain P."/>
            <person name="Malfatti S."/>
            <person name="Shin M."/>
            <person name="Vergez L."/>
            <person name="Schmutz J."/>
            <person name="Larimer F."/>
            <person name="Land M."/>
            <person name="Hauser L."/>
            <person name="Kyrpides N."/>
            <person name="Anderson I."/>
            <person name="Sieprawska-Lupa M."/>
            <person name="Whitman W.B."/>
            <person name="Richardson P."/>
        </authorList>
    </citation>
    <scope>NUCLEOTIDE SEQUENCE [LARGE SCALE GENOMIC DNA]</scope>
    <source>
        <strain>ATCC 35089 / DSM 1224 / JCM 13029 / OCM 148 / SB</strain>
    </source>
</reference>
<proteinExistence type="inferred from homology"/>
<protein>
    <recommendedName>
        <fullName evidence="1">Putative HTH-type transcriptional regulatory protein Mevan_1514</fullName>
    </recommendedName>
</protein>
<accession>A6USD6</accession>
<gene>
    <name type="ordered locus">Mevan_1514</name>
</gene>
<dbReference type="EMBL" id="CP000742">
    <property type="protein sequence ID" value="ABR55408.1"/>
    <property type="molecule type" value="Genomic_DNA"/>
</dbReference>
<dbReference type="RefSeq" id="WP_012066322.1">
    <property type="nucleotide sequence ID" value="NC_009634.1"/>
</dbReference>
<dbReference type="SMR" id="A6USD6"/>
<dbReference type="STRING" id="406327.Mevan_1514"/>
<dbReference type="GeneID" id="5324555"/>
<dbReference type="KEGG" id="mvn:Mevan_1514"/>
<dbReference type="eggNOG" id="arCOG04152">
    <property type="taxonomic scope" value="Archaea"/>
</dbReference>
<dbReference type="HOGENOM" id="CLU_075726_0_0_2"/>
<dbReference type="OrthoDB" id="31424at2157"/>
<dbReference type="Proteomes" id="UP000001107">
    <property type="component" value="Chromosome"/>
</dbReference>
<dbReference type="GO" id="GO:0003677">
    <property type="term" value="F:DNA binding"/>
    <property type="evidence" value="ECO:0007669"/>
    <property type="project" value="UniProtKB-KW"/>
</dbReference>
<dbReference type="GO" id="GO:0003700">
    <property type="term" value="F:DNA-binding transcription factor activity"/>
    <property type="evidence" value="ECO:0007669"/>
    <property type="project" value="UniProtKB-UniRule"/>
</dbReference>
<dbReference type="CDD" id="cd00093">
    <property type="entry name" value="HTH_XRE"/>
    <property type="match status" value="1"/>
</dbReference>
<dbReference type="Gene3D" id="1.10.260.40">
    <property type="entry name" value="lambda repressor-like DNA-binding domains"/>
    <property type="match status" value="1"/>
</dbReference>
<dbReference type="HAMAP" id="MF_00584">
    <property type="entry name" value="HTH_type_cro_C1"/>
    <property type="match status" value="1"/>
</dbReference>
<dbReference type="InterPro" id="IPR020886">
    <property type="entry name" value="Arc_TR_HTH"/>
</dbReference>
<dbReference type="InterPro" id="IPR001387">
    <property type="entry name" value="Cro/C1-type_HTH"/>
</dbReference>
<dbReference type="InterPro" id="IPR010982">
    <property type="entry name" value="Lambda_DNA-bd_dom_sf"/>
</dbReference>
<dbReference type="NCBIfam" id="NF003162">
    <property type="entry name" value="PRK04140.1"/>
    <property type="match status" value="1"/>
</dbReference>
<dbReference type="Pfam" id="PF01381">
    <property type="entry name" value="HTH_3"/>
    <property type="match status" value="1"/>
</dbReference>
<dbReference type="SMART" id="SM00530">
    <property type="entry name" value="HTH_XRE"/>
    <property type="match status" value="1"/>
</dbReference>
<dbReference type="SUPFAM" id="SSF47413">
    <property type="entry name" value="lambda repressor-like DNA-binding domains"/>
    <property type="match status" value="1"/>
</dbReference>
<dbReference type="PROSITE" id="PS50943">
    <property type="entry name" value="HTH_CROC1"/>
    <property type="match status" value="1"/>
</dbReference>